<accession>Q82AK9</accession>
<dbReference type="EC" id="7.1.1.9"/>
<dbReference type="EMBL" id="BA000030">
    <property type="protein sequence ID" value="BAC73759.1"/>
    <property type="molecule type" value="Genomic_DNA"/>
</dbReference>
<dbReference type="SMR" id="Q82AK9"/>
<dbReference type="GeneID" id="41543125"/>
<dbReference type="KEGG" id="sma:SAVERM_6048"/>
<dbReference type="eggNOG" id="COG0843">
    <property type="taxonomic scope" value="Bacteria"/>
</dbReference>
<dbReference type="HOGENOM" id="CLU_011899_7_3_11"/>
<dbReference type="OrthoDB" id="9803294at2"/>
<dbReference type="UniPathway" id="UPA00705"/>
<dbReference type="Proteomes" id="UP000000428">
    <property type="component" value="Chromosome"/>
</dbReference>
<dbReference type="GO" id="GO:0005886">
    <property type="term" value="C:plasma membrane"/>
    <property type="evidence" value="ECO:0007669"/>
    <property type="project" value="UniProtKB-SubCell"/>
</dbReference>
<dbReference type="GO" id="GO:0004129">
    <property type="term" value="F:cytochrome-c oxidase activity"/>
    <property type="evidence" value="ECO:0007669"/>
    <property type="project" value="UniProtKB-EC"/>
</dbReference>
<dbReference type="GO" id="GO:0020037">
    <property type="term" value="F:heme binding"/>
    <property type="evidence" value="ECO:0007669"/>
    <property type="project" value="InterPro"/>
</dbReference>
<dbReference type="GO" id="GO:0046872">
    <property type="term" value="F:metal ion binding"/>
    <property type="evidence" value="ECO:0007669"/>
    <property type="project" value="UniProtKB-KW"/>
</dbReference>
<dbReference type="GO" id="GO:0015990">
    <property type="term" value="P:electron transport coupled proton transport"/>
    <property type="evidence" value="ECO:0007669"/>
    <property type="project" value="InterPro"/>
</dbReference>
<dbReference type="GO" id="GO:0006119">
    <property type="term" value="P:oxidative phosphorylation"/>
    <property type="evidence" value="ECO:0007669"/>
    <property type="project" value="UniProtKB-UniPathway"/>
</dbReference>
<dbReference type="GO" id="GO:0022904">
    <property type="term" value="P:respiratory electron transport chain"/>
    <property type="evidence" value="ECO:0007669"/>
    <property type="project" value="TreeGrafter"/>
</dbReference>
<dbReference type="CDD" id="cd01662">
    <property type="entry name" value="Ubiquinol_Oxidase_I"/>
    <property type="match status" value="1"/>
</dbReference>
<dbReference type="FunFam" id="1.20.210.10:FF:000003">
    <property type="entry name" value="Cytochrome c oxidase subunit 1"/>
    <property type="match status" value="1"/>
</dbReference>
<dbReference type="Gene3D" id="1.20.210.10">
    <property type="entry name" value="Cytochrome c oxidase-like, subunit I domain"/>
    <property type="match status" value="1"/>
</dbReference>
<dbReference type="InterPro" id="IPR023616">
    <property type="entry name" value="Cyt_c_oxase-like_su1_dom"/>
</dbReference>
<dbReference type="InterPro" id="IPR036927">
    <property type="entry name" value="Cyt_c_oxase-like_su1_sf"/>
</dbReference>
<dbReference type="InterPro" id="IPR000883">
    <property type="entry name" value="Cyt_C_Oxase_1"/>
</dbReference>
<dbReference type="InterPro" id="IPR023615">
    <property type="entry name" value="Cyt_c_Oxase_su1_BS"/>
</dbReference>
<dbReference type="InterPro" id="IPR014241">
    <property type="entry name" value="Cyt_c_oxidase_su1_bac"/>
</dbReference>
<dbReference type="NCBIfam" id="TIGR02891">
    <property type="entry name" value="CtaD_CoxA"/>
    <property type="match status" value="1"/>
</dbReference>
<dbReference type="PANTHER" id="PTHR10422">
    <property type="entry name" value="CYTOCHROME C OXIDASE SUBUNIT 1"/>
    <property type="match status" value="1"/>
</dbReference>
<dbReference type="PANTHER" id="PTHR10422:SF18">
    <property type="entry name" value="CYTOCHROME C OXIDASE SUBUNIT 1"/>
    <property type="match status" value="1"/>
</dbReference>
<dbReference type="Pfam" id="PF00115">
    <property type="entry name" value="COX1"/>
    <property type="match status" value="1"/>
</dbReference>
<dbReference type="PRINTS" id="PR01165">
    <property type="entry name" value="CYCOXIDASEI"/>
</dbReference>
<dbReference type="SUPFAM" id="SSF81442">
    <property type="entry name" value="Cytochrome c oxidase subunit I-like"/>
    <property type="match status" value="1"/>
</dbReference>
<dbReference type="PROSITE" id="PS50855">
    <property type="entry name" value="COX1"/>
    <property type="match status" value="1"/>
</dbReference>
<dbReference type="PROSITE" id="PS00077">
    <property type="entry name" value="COX1_CUB"/>
    <property type="match status" value="1"/>
</dbReference>
<comment type="function">
    <text evidence="1">Cytochrome c oxidase is the component of the respiratory chain that catalyzes the reduction of oxygen to water. Subunits 1-3 form the functional core of the enzyme complex. CO I is the catalytic subunit of the enzyme. Electrons originating in cytochrome c are transferred via the copper A center of subunit 2 and heme A of subunit 1 to the bimetallic center formed by heme A3 and copper B (By similarity).</text>
</comment>
<comment type="catalytic activity">
    <reaction>
        <text>4 Fe(II)-[cytochrome c] + O2 + 8 H(+)(in) = 4 Fe(III)-[cytochrome c] + 2 H2O + 4 H(+)(out)</text>
        <dbReference type="Rhea" id="RHEA:11436"/>
        <dbReference type="Rhea" id="RHEA-COMP:10350"/>
        <dbReference type="Rhea" id="RHEA-COMP:14399"/>
        <dbReference type="ChEBI" id="CHEBI:15377"/>
        <dbReference type="ChEBI" id="CHEBI:15378"/>
        <dbReference type="ChEBI" id="CHEBI:15379"/>
        <dbReference type="ChEBI" id="CHEBI:29033"/>
        <dbReference type="ChEBI" id="CHEBI:29034"/>
        <dbReference type="EC" id="7.1.1.9"/>
    </reaction>
</comment>
<comment type="cofactor">
    <cofactor evidence="1">
        <name>Cu(2+)</name>
        <dbReference type="ChEBI" id="CHEBI:29036"/>
    </cofactor>
    <text evidence="1">Binds 1 copper B ion per subunit.</text>
</comment>
<comment type="cofactor">
    <cofactor evidence="1">
        <name>heme</name>
        <dbReference type="ChEBI" id="CHEBI:30413"/>
    </cofactor>
    <text evidence="1">Binds 2 heme groups per subunit.</text>
</comment>
<comment type="pathway">
    <text>Energy metabolism; oxidative phosphorylation.</text>
</comment>
<comment type="subunit">
    <text evidence="1">Associates with subunits II, III and IV to form cytochrome c oxidase.</text>
</comment>
<comment type="subcellular location">
    <subcellularLocation>
        <location evidence="1">Cell membrane</location>
        <topology evidence="1">Multi-pass membrane protein</topology>
    </subcellularLocation>
</comment>
<comment type="similarity">
    <text evidence="4">Belongs to the heme-copper respiratory oxidase family.</text>
</comment>
<gene>
    <name type="primary">ctaD1</name>
    <name type="ordered locus">SAV_6048</name>
</gene>
<evidence type="ECO:0000250" key="1"/>
<evidence type="ECO:0000255" key="2"/>
<evidence type="ECO:0000256" key="3">
    <source>
        <dbReference type="SAM" id="MobiDB-lite"/>
    </source>
</evidence>
<evidence type="ECO:0000305" key="4"/>
<reference key="1">
    <citation type="journal article" date="2001" name="Proc. Natl. Acad. Sci. U.S.A.">
        <title>Genome sequence of an industrial microorganism Streptomyces avermitilis: deducing the ability of producing secondary metabolites.</title>
        <authorList>
            <person name="Omura S."/>
            <person name="Ikeda H."/>
            <person name="Ishikawa J."/>
            <person name="Hanamoto A."/>
            <person name="Takahashi C."/>
            <person name="Shinose M."/>
            <person name="Takahashi Y."/>
            <person name="Horikawa H."/>
            <person name="Nakazawa H."/>
            <person name="Osonoe T."/>
            <person name="Kikuchi H."/>
            <person name="Shiba T."/>
            <person name="Sakaki Y."/>
            <person name="Hattori M."/>
        </authorList>
    </citation>
    <scope>NUCLEOTIDE SEQUENCE [LARGE SCALE GENOMIC DNA]</scope>
    <source>
        <strain>ATCC 31267 / DSM 46492 / JCM 5070 / NBRC 14893 / NCIMB 12804 / NRRL 8165 / MA-4680</strain>
    </source>
</reference>
<reference key="2">
    <citation type="journal article" date="2003" name="Nat. Biotechnol.">
        <title>Complete genome sequence and comparative analysis of the industrial microorganism Streptomyces avermitilis.</title>
        <authorList>
            <person name="Ikeda H."/>
            <person name="Ishikawa J."/>
            <person name="Hanamoto A."/>
            <person name="Shinose M."/>
            <person name="Kikuchi H."/>
            <person name="Shiba T."/>
            <person name="Sakaki Y."/>
            <person name="Hattori M."/>
            <person name="Omura S."/>
        </authorList>
    </citation>
    <scope>NUCLEOTIDE SEQUENCE [LARGE SCALE GENOMIC DNA]</scope>
    <source>
        <strain>ATCC 31267 / DSM 46492 / JCM 5070 / NBRC 14893 / NCIMB 12804 / NRRL 8165 / MA-4680</strain>
    </source>
</reference>
<feature type="chain" id="PRO_0000183450" description="Probable cytochrome c oxidase subunit 1-alpha">
    <location>
        <begin position="1"/>
        <end position="579"/>
    </location>
</feature>
<feature type="transmembrane region" description="Helical" evidence="2">
    <location>
        <begin position="44"/>
        <end position="64"/>
    </location>
</feature>
<feature type="transmembrane region" description="Helical" evidence="2">
    <location>
        <begin position="93"/>
        <end position="113"/>
    </location>
</feature>
<feature type="transmembrane region" description="Helical" evidence="2">
    <location>
        <begin position="125"/>
        <end position="145"/>
    </location>
</feature>
<feature type="transmembrane region" description="Helical" evidence="2">
    <location>
        <begin position="174"/>
        <end position="194"/>
    </location>
</feature>
<feature type="transmembrane region" description="Helical" evidence="2">
    <location>
        <begin position="217"/>
        <end position="237"/>
    </location>
</feature>
<feature type="transmembrane region" description="Helical" evidence="2">
    <location>
        <begin position="262"/>
        <end position="282"/>
    </location>
</feature>
<feature type="transmembrane region" description="Helical" evidence="2">
    <location>
        <begin position="295"/>
        <end position="315"/>
    </location>
</feature>
<feature type="transmembrane region" description="Helical" evidence="2">
    <location>
        <begin position="319"/>
        <end position="339"/>
    </location>
</feature>
<feature type="transmembrane region" description="Helical" evidence="2">
    <location>
        <begin position="363"/>
        <end position="383"/>
    </location>
</feature>
<feature type="transmembrane region" description="Helical" evidence="2">
    <location>
        <begin position="397"/>
        <end position="417"/>
    </location>
</feature>
<feature type="transmembrane region" description="Helical" evidence="2">
    <location>
        <begin position="437"/>
        <end position="457"/>
    </location>
</feature>
<feature type="transmembrane region" description="Helical" evidence="2">
    <location>
        <begin position="480"/>
        <end position="500"/>
    </location>
</feature>
<feature type="region of interest" description="Disordered" evidence="3">
    <location>
        <begin position="1"/>
        <end position="21"/>
    </location>
</feature>
<feature type="binding site" description="axial binding residue" evidence="1">
    <location>
        <position position="90"/>
    </location>
    <ligand>
        <name>Fe(II)-heme a</name>
        <dbReference type="ChEBI" id="CHEBI:61715"/>
    </ligand>
    <ligandPart>
        <name>Fe</name>
        <dbReference type="ChEBI" id="CHEBI:18248"/>
    </ligandPart>
</feature>
<feature type="binding site" evidence="1">
    <location>
        <position position="268"/>
    </location>
    <ligand>
        <name>Cu cation</name>
        <dbReference type="ChEBI" id="CHEBI:23378"/>
        <label>B</label>
    </ligand>
</feature>
<feature type="binding site" evidence="1">
    <location>
        <position position="272"/>
    </location>
    <ligand>
        <name>Cu cation</name>
        <dbReference type="ChEBI" id="CHEBI:23378"/>
        <label>B</label>
    </ligand>
</feature>
<feature type="binding site" evidence="1">
    <location>
        <position position="317"/>
    </location>
    <ligand>
        <name>Cu cation</name>
        <dbReference type="ChEBI" id="CHEBI:23378"/>
        <label>B</label>
    </ligand>
</feature>
<feature type="binding site" evidence="1">
    <location>
        <position position="318"/>
    </location>
    <ligand>
        <name>Cu cation</name>
        <dbReference type="ChEBI" id="CHEBI:23378"/>
        <label>B</label>
    </ligand>
</feature>
<feature type="binding site" description="axial binding residue" evidence="1">
    <location>
        <position position="401"/>
    </location>
    <ligand>
        <name>heme a3</name>
        <dbReference type="ChEBI" id="CHEBI:83282"/>
    </ligand>
    <ligandPart>
        <name>Fe</name>
        <dbReference type="ChEBI" id="CHEBI:18248"/>
    </ligandPart>
</feature>
<feature type="binding site" description="axial binding residue" evidence="1">
    <location>
        <position position="403"/>
    </location>
    <ligand>
        <name>Fe(II)-heme a</name>
        <dbReference type="ChEBI" id="CHEBI:61715"/>
    </ligand>
    <ligandPart>
        <name>Fe</name>
        <dbReference type="ChEBI" id="CHEBI:18248"/>
    </ligandPart>
</feature>
<feature type="cross-link" description="1'-histidyl-3'-tyrosine (His-Tyr)" evidence="1">
    <location>
        <begin position="268"/>
        <end position="272"/>
    </location>
</feature>
<protein>
    <recommendedName>
        <fullName>Probable cytochrome c oxidase subunit 1-alpha</fullName>
        <ecNumber>7.1.1.9</ecNumber>
    </recommendedName>
    <alternativeName>
        <fullName>Cytochrome aa3 subunit 1-alpha</fullName>
    </alternativeName>
    <alternativeName>
        <fullName>Cytochrome c oxidase polypeptide I-alpha</fullName>
    </alternativeName>
</protein>
<proteinExistence type="inferred from homology"/>
<keyword id="KW-1003">Cell membrane</keyword>
<keyword id="KW-0186">Copper</keyword>
<keyword id="KW-0249">Electron transport</keyword>
<keyword id="KW-0349">Heme</keyword>
<keyword id="KW-0408">Iron</keyword>
<keyword id="KW-0472">Membrane</keyword>
<keyword id="KW-0479">Metal-binding</keyword>
<keyword id="KW-1185">Reference proteome</keyword>
<keyword id="KW-0679">Respiratory chain</keyword>
<keyword id="KW-1278">Translocase</keyword>
<keyword id="KW-0812">Transmembrane</keyword>
<keyword id="KW-1133">Transmembrane helix</keyword>
<keyword id="KW-0813">Transport</keyword>
<name>COX1A_STRAW</name>
<organism>
    <name type="scientific">Streptomyces avermitilis (strain ATCC 31267 / DSM 46492 / JCM 5070 / NBRC 14893 / NCIMB 12804 / NRRL 8165 / MA-4680)</name>
    <dbReference type="NCBI Taxonomy" id="227882"/>
    <lineage>
        <taxon>Bacteria</taxon>
        <taxon>Bacillati</taxon>
        <taxon>Actinomycetota</taxon>
        <taxon>Actinomycetes</taxon>
        <taxon>Kitasatosporales</taxon>
        <taxon>Streptomycetaceae</taxon>
        <taxon>Streptomyces</taxon>
    </lineage>
</organism>
<sequence>MSILNEPQGAAAAEDSYENELPVRRKQPGNVVVKWLTTTDHKTIGTLYLVTSFAFFCIGGVMALLMRAELARPGMQIMSSEQFNQAFTMHGTIMLLMFATPLFAGFANWIMPLQIGAPDVAFPRLNMFAYWLYLFGSLIAVGGFLTPQGAADFGWFAYSPLSDAVRSPGIGADMWIMGLAFSGFGTILGSVNFITTIICMRAPGMTMFRMPIFVWNVLLTGVLVLLAFPVLAAALFALEADRKFGAHVFDAANGGALLWQHLFWFFGHPEVYIIALPFFGIISEVIPVFSRKPMFGYMGLIGATIAIAGLSVTVWAHHMYVTGGVLLPFFSFMTFLIAVPTGVKFFNWIGTMWKGSLSFETPMLWATGFLITFTFGGLTGVILASPPMDFHVSDSYFVVAHFHYVVFGTVVFAMFSGFHYWWPKFTGKMLDERLGKITFWTLFVGFHGTFLIQHWLGAEGMPRRYADYLAADGFTALNTISTICSFLLGLSILPFLYNVWKTAKYGKPVGVDDPWGYGRSLEWATSCPPPRHNFLTLPRIRSESPAFDLHHPEIAALDQLENAGHGEKAAVAGGKEAGK</sequence>